<comment type="function">
    <text evidence="1">Part of the accessory SecA2/SecY2 system specifically required to export GspB, a serine-rich repeat cell wall protein encoded upstream in the same operon.</text>
</comment>
<comment type="subunit">
    <text>Part of the accessory SecA2/SecY2 protein translocation apparatus required to export cell wall protein GspB. Binds the Ser-rich domains (SSR1 and SSR2) of non-glycosylated GspB, binds much less to glycosylated protein.</text>
</comment>
<comment type="interaction">
    <interactant intactId="EBI-6414568">
        <id>Q9AET7</id>
    </interactant>
    <interactant intactId="EBI-6414561">
        <id>Q939N5</id>
        <label>gspB</label>
    </interactant>
    <organismsDiffer>false</organismsDiffer>
    <experiments>4</experiments>
</comment>
<comment type="disruption phenotype">
    <text evidence="1">Loss of export of cell wall protein GspB, the protein accumulates intracellularly in protoplasts.</text>
</comment>
<comment type="similarity">
    <text evidence="2">Belongs to the accessory Sec system protein Asp3 family.</text>
</comment>
<proteinExistence type="evidence at protein level"/>
<sequence>MKIQKHKEIYWGELRGASISKTRKDFTYLYGSTIIFHSPDQVYFENKLIASGQTIHEWSSSWNYQGDRQVPSLPLLKRGRSYSLTRDMTSYPSESVFLKLIFFDRYNREVSNHVERSDKMTFTYPEEAYSYKVQLLSAGVESFEFHCLRIEEILEESNG</sequence>
<evidence type="ECO:0000269" key="1">
    <source>
    </source>
</evidence>
<evidence type="ECO:0000305" key="2"/>
<evidence type="ECO:0007829" key="3">
    <source>
        <dbReference type="PDB" id="5VAE"/>
    </source>
</evidence>
<accession>Q9AET7</accession>
<feature type="chain" id="PRO_0000414200" description="Accessory Sec system protein Asp3">
    <location>
        <begin position="1"/>
        <end position="159"/>
    </location>
</feature>
<feature type="strand" evidence="3">
    <location>
        <begin position="7"/>
        <end position="9"/>
    </location>
</feature>
<feature type="strand" evidence="3">
    <location>
        <begin position="35"/>
        <end position="38"/>
    </location>
</feature>
<feature type="strand" evidence="3">
    <location>
        <begin position="41"/>
        <end position="45"/>
    </location>
</feature>
<feature type="strand" evidence="3">
    <location>
        <begin position="55"/>
        <end position="61"/>
    </location>
</feature>
<feature type="strand" evidence="3">
    <location>
        <begin position="81"/>
        <end position="90"/>
    </location>
</feature>
<feature type="strand" evidence="3">
    <location>
        <begin position="98"/>
        <end position="103"/>
    </location>
</feature>
<feature type="strand" evidence="3">
    <location>
        <begin position="109"/>
        <end position="123"/>
    </location>
</feature>
<feature type="strand" evidence="3">
    <location>
        <begin position="129"/>
        <end position="135"/>
    </location>
</feature>
<feature type="strand" evidence="3">
    <location>
        <begin position="142"/>
        <end position="152"/>
    </location>
</feature>
<reference key="1">
    <citation type="journal article" date="2002" name="Mol. Microbiol.">
        <title>An accessory sec locus of Streptococcus gordonii is required for export of the surface protein GspB and for normal levels of binding to human platelets.</title>
        <authorList>
            <person name="Bensing B.A."/>
            <person name="Sullam P.M."/>
        </authorList>
    </citation>
    <scope>NUCLEOTIDE SEQUENCE [GENOMIC DNA]</scope>
    <source>
        <strain>M99</strain>
    </source>
</reference>
<reference key="2">
    <citation type="journal article" date="2004" name="Mol. Microbiol.">
        <title>Genes in the accessory sec locus of Streptococcus gordonii have three functionally distinct effects on the expression of the platelet-binding protein GspB.</title>
        <authorList>
            <person name="Takamatsu D."/>
            <person name="Bensing B.A."/>
            <person name="Sullam P.M."/>
        </authorList>
    </citation>
    <scope>FUNCTION</scope>
    <scope>DISRUPTION PHENOTYPE</scope>
    <source>
        <strain>M99</strain>
    </source>
</reference>
<reference key="3">
    <citation type="journal article" date="2011" name="J. Bacteriol.">
        <title>Asp2 and Asp3 interact directly with GspB, the export substrate of the Streptococcus gordonii accessory Sec System.</title>
        <authorList>
            <person name="Yen Y.T."/>
            <person name="Seepersaud R."/>
            <person name="Bensing B.A."/>
            <person name="Sullam P.M."/>
        </authorList>
    </citation>
    <scope>INTERACTION WITH GSPB</scope>
</reference>
<dbReference type="EMBL" id="AY028381">
    <property type="protein sequence ID" value="AAK17000.1"/>
    <property type="molecule type" value="Genomic_DNA"/>
</dbReference>
<dbReference type="RefSeq" id="WP_061598994.1">
    <property type="nucleotide sequence ID" value="NZ_JAHZQG010000004.1"/>
</dbReference>
<dbReference type="PDB" id="5VAE">
    <property type="method" value="X-ray"/>
    <property type="resolution" value="3.11 A"/>
    <property type="chains" value="B/D/F/H=1-159"/>
</dbReference>
<dbReference type="PDBsum" id="5VAE"/>
<dbReference type="SMR" id="Q9AET7"/>
<dbReference type="IntAct" id="Q9AET7">
    <property type="interactions" value="1"/>
</dbReference>
<dbReference type="TCDB" id="3.A.5.10.1">
    <property type="family name" value="the general secretory pathway (sec) family"/>
</dbReference>
<dbReference type="GO" id="GO:0015031">
    <property type="term" value="P:protein transport"/>
    <property type="evidence" value="ECO:0007669"/>
    <property type="project" value="UniProtKB-KW"/>
</dbReference>
<dbReference type="InterPro" id="IPR022259">
    <property type="entry name" value="Acessory_Sec_prot_Asp3"/>
</dbReference>
<dbReference type="NCBIfam" id="TIGR03711">
    <property type="entry name" value="acc_sec_asp3"/>
    <property type="match status" value="1"/>
</dbReference>
<dbReference type="Pfam" id="PF15432">
    <property type="entry name" value="Sec-ASP3"/>
    <property type="match status" value="1"/>
</dbReference>
<organism>
    <name type="scientific">Streptococcus gordonii</name>
    <dbReference type="NCBI Taxonomy" id="1302"/>
    <lineage>
        <taxon>Bacteria</taxon>
        <taxon>Bacillati</taxon>
        <taxon>Bacillota</taxon>
        <taxon>Bacilli</taxon>
        <taxon>Lactobacillales</taxon>
        <taxon>Streptococcaceae</taxon>
        <taxon>Streptococcus</taxon>
    </lineage>
</organism>
<protein>
    <recommendedName>
        <fullName>Accessory Sec system protein Asp3</fullName>
    </recommendedName>
    <alternativeName>
        <fullName>Accessory secretory protein Asp3</fullName>
    </alternativeName>
    <alternativeName>
        <fullName>Orf3</fullName>
    </alternativeName>
</protein>
<name>ASP3_STRGN</name>
<keyword id="KW-0002">3D-structure</keyword>
<keyword id="KW-0653">Protein transport</keyword>
<keyword id="KW-0811">Translocation</keyword>
<keyword id="KW-0813">Transport</keyword>
<gene>
    <name type="primary">asp3</name>
</gene>